<keyword id="KW-0328">Glycosyltransferase</keyword>
<keyword id="KW-0808">Transferase</keyword>
<dbReference type="EC" id="2.4.1.-"/>
<dbReference type="EMBL" id="AM408590">
    <property type="protein sequence ID" value="CAL72972.1"/>
    <property type="molecule type" value="Genomic_DNA"/>
</dbReference>
<dbReference type="RefSeq" id="WP_003414922.1">
    <property type="nucleotide sequence ID" value="NC_008769.1"/>
</dbReference>
<dbReference type="SMR" id="A1KMV6"/>
<dbReference type="CAZy" id="GT1">
    <property type="family name" value="Glycosyltransferase Family 1"/>
</dbReference>
<dbReference type="KEGG" id="mbb:BCG_2983c"/>
<dbReference type="HOGENOM" id="CLU_692271_0_0_11"/>
<dbReference type="Proteomes" id="UP000001472">
    <property type="component" value="Chromosome"/>
</dbReference>
<dbReference type="GO" id="GO:0016758">
    <property type="term" value="F:hexosyltransferase activity"/>
    <property type="evidence" value="ECO:0007669"/>
    <property type="project" value="UniProtKB-ARBA"/>
</dbReference>
<dbReference type="GO" id="GO:0008194">
    <property type="term" value="F:UDP-glycosyltransferase activity"/>
    <property type="evidence" value="ECO:0007669"/>
    <property type="project" value="InterPro"/>
</dbReference>
<dbReference type="GO" id="GO:0009058">
    <property type="term" value="P:biosynthetic process"/>
    <property type="evidence" value="ECO:0007669"/>
    <property type="project" value="UniProtKB-ARBA"/>
</dbReference>
<dbReference type="CDD" id="cd03784">
    <property type="entry name" value="GT1_Gtf-like"/>
    <property type="match status" value="1"/>
</dbReference>
<dbReference type="FunFam" id="3.40.50.2000:FF:000072">
    <property type="entry name" value="Glycosyl transferase"/>
    <property type="match status" value="1"/>
</dbReference>
<dbReference type="FunFam" id="3.40.50.2000:FF:000233">
    <property type="entry name" value="PGL/p-HBAD biosynthesis rhamnosyltransferase"/>
    <property type="match status" value="1"/>
</dbReference>
<dbReference type="Gene3D" id="3.40.50.2000">
    <property type="entry name" value="Glycogen Phosphorylase B"/>
    <property type="match status" value="2"/>
</dbReference>
<dbReference type="InterPro" id="IPR010610">
    <property type="entry name" value="EryCIII-like_C"/>
</dbReference>
<dbReference type="InterPro" id="IPR002213">
    <property type="entry name" value="UDP_glucos_trans"/>
</dbReference>
<dbReference type="PANTHER" id="PTHR21015:SF22">
    <property type="entry name" value="GLYCOSYLTRANSFERASE"/>
    <property type="match status" value="1"/>
</dbReference>
<dbReference type="PANTHER" id="PTHR21015">
    <property type="entry name" value="UDP-N-ACETYLGLUCOSAMINE--N-ACETYLMURAMYL-(PENTAPEPTIDE) PYROPHOSPHORYL-UNDECAPRENOL N-ACETYLGLUCOSAMINE TRANSFERASE 1"/>
    <property type="match status" value="1"/>
</dbReference>
<dbReference type="Pfam" id="PF06722">
    <property type="entry name" value="EryCIII-like_C"/>
    <property type="match status" value="1"/>
</dbReference>
<dbReference type="SUPFAM" id="SSF53756">
    <property type="entry name" value="UDP-Glycosyltransferase/glycogen phosphorylase"/>
    <property type="match status" value="1"/>
</dbReference>
<name>RNTF_MYCBP</name>
<comment type="function">
    <text evidence="1">Catalyzes the transfer of the first rhamnosyl residue on p-hydroxybenzoic acid or phenolphthiocerol derivatives to form, after O-methylation at position 2 of the sugar unit, mono-O-methyl-glycosyl-p-hydroxybenzoic acid derivative (p-HBAD I) and 2-O-methyl-rhamnosyl-phenolphthiocerol dimycocerosate (also called mycoside B) during p-hydroxybenzoic acid derivatives (p-HBAD) and glycosylated phenolphthiocerol dimycocerosates (PGL) biosynthesis.</text>
</comment>
<comment type="similarity">
    <text evidence="2">Belongs to the glycosyltransferase 28 family.</text>
</comment>
<proteinExistence type="inferred from homology"/>
<sequence>MRVSCVYATASRWGGPPVASEVRGDAAISTTPDAAPGLAARRRRILFVAEAVTLAHVVRPFALAQSLDPSRYEVHFACDPRYNQLLGPLPFRHHAIHTIPSERFFGNLTQGRFYAMRTLRKYVEADLRVLDEIAPDLVVGDLRISLSVSARLAGIPYIAIANAYWSPYAQRRFPLPDVIWTRLFGVRLVKLLYRLERPLLFALQCMPLNWVRRRHGLSSLGWNLCRIFTDGDHTLYADVPELMPTYDLPANHEYLGPVLWSPAGKPPTWWDSLPTDRPIVYATLGTSGGRNLLQLVLNALAELPVTVIAATAGRSDLKTVPANAFVADYLPGEAAAARSAVVVCNGGSLTTQQALVAGVPVIGVAGNLDQHLNMEAVERAGAGVLLRTERLKSQRVAGAVMQVISRSEYRQAAARLADAFGRDRVGFPQHVENALRLMPENRPRTWLAS</sequence>
<protein>
    <recommendedName>
        <fullName>PGL/p-HBAD biosynthesis rhamnosyltransferase</fullName>
        <ecNumber>2.4.1.-</ecNumber>
    </recommendedName>
</protein>
<evidence type="ECO:0000250" key="1"/>
<evidence type="ECO:0000305" key="2"/>
<accession>A1KMV6</accession>
<gene>
    <name type="ordered locus">BCG_2983c</name>
</gene>
<feature type="chain" id="PRO_0000313791" description="PGL/p-HBAD biosynthesis rhamnosyltransferase">
    <location>
        <begin position="1"/>
        <end position="449"/>
    </location>
</feature>
<organism>
    <name type="scientific">Mycobacterium bovis (strain BCG / Pasteur 1173P2)</name>
    <dbReference type="NCBI Taxonomy" id="410289"/>
    <lineage>
        <taxon>Bacteria</taxon>
        <taxon>Bacillati</taxon>
        <taxon>Actinomycetota</taxon>
        <taxon>Actinomycetes</taxon>
        <taxon>Mycobacteriales</taxon>
        <taxon>Mycobacteriaceae</taxon>
        <taxon>Mycobacterium</taxon>
        <taxon>Mycobacterium tuberculosis complex</taxon>
    </lineage>
</organism>
<reference key="1">
    <citation type="journal article" date="2007" name="Proc. Natl. Acad. Sci. U.S.A.">
        <title>Genome plasticity of BCG and impact on vaccine efficacy.</title>
        <authorList>
            <person name="Brosch R."/>
            <person name="Gordon S.V."/>
            <person name="Garnier T."/>
            <person name="Eiglmeier K."/>
            <person name="Frigui W."/>
            <person name="Valenti P."/>
            <person name="Dos Santos S."/>
            <person name="Duthoy S."/>
            <person name="Lacroix C."/>
            <person name="Garcia-Pelayo C."/>
            <person name="Inwald J.K."/>
            <person name="Golby P."/>
            <person name="Garcia J.N."/>
            <person name="Hewinson R.G."/>
            <person name="Behr M.A."/>
            <person name="Quail M.A."/>
            <person name="Churcher C."/>
            <person name="Barrell B.G."/>
            <person name="Parkhill J."/>
            <person name="Cole S.T."/>
        </authorList>
    </citation>
    <scope>NUCLEOTIDE SEQUENCE [LARGE SCALE GENOMIC DNA]</scope>
    <source>
        <strain>BCG / Pasteur 1173P2</strain>
    </source>
</reference>